<reference key="1">
    <citation type="journal article" date="2011" name="Stand. Genomic Sci.">
        <title>Complete genome sequence of Parvibaculum lavamentivorans type strain (DS-1(T)).</title>
        <authorList>
            <person name="Schleheck D."/>
            <person name="Weiss M."/>
            <person name="Pitluck S."/>
            <person name="Bruce D."/>
            <person name="Land M.L."/>
            <person name="Han S."/>
            <person name="Saunders E."/>
            <person name="Tapia R."/>
            <person name="Detter C."/>
            <person name="Brettin T."/>
            <person name="Han J."/>
            <person name="Woyke T."/>
            <person name="Goodwin L."/>
            <person name="Pennacchio L."/>
            <person name="Nolan M."/>
            <person name="Cook A.M."/>
            <person name="Kjelleberg S."/>
            <person name="Thomas T."/>
        </authorList>
    </citation>
    <scope>NUCLEOTIDE SEQUENCE [LARGE SCALE GENOMIC DNA]</scope>
    <source>
        <strain>DS-1 / DSM 13023 / NCIMB 13966</strain>
    </source>
</reference>
<proteinExistence type="inferred from homology"/>
<sequence>MFDIKAIRDDAGAFDAGLAKRGLAPQAARLIEIDERRRAIITSLQELQQRRNDASKQIGQAKAKKDDALAQSLMEEVASIKSAIQEGEEKERAANAEIEAALASIPNIPFDDVPVGPDESANVIRHSHGKAREMNFAPKEHFDLGEALGLMDFEAAAKMSGARFTVLKGQLARLERAIGNFMVDLHTTEFGYEEVAPPLMVRDDAMFGTAQLPKFEDDQFATFKGLARDDQEKYWLIPTAEVPLTNLVRESILSEEELPKRFTAYTACFRAEAGSAGRDTRGMIRQHQFSKVELVSITTPEKSREEHERMLSCAEEVLKRLDLHYRVMTLSTGDMGFASRKTYDIEVWLPGQNAFREISSCSVCGDFQARRMNARYRPKGEKNTRFVHTLNGSGLAVGRALVAVMENYQQADGSITVPTALQPYMGGQEVIAVHG</sequence>
<gene>
    <name evidence="1" type="primary">serS</name>
    <name type="ordered locus">Plav_3030</name>
</gene>
<name>SYS_PARL1</name>
<evidence type="ECO:0000255" key="1">
    <source>
        <dbReference type="HAMAP-Rule" id="MF_00176"/>
    </source>
</evidence>
<feature type="chain" id="PRO_1000071637" description="Serine--tRNA ligase">
    <location>
        <begin position="1"/>
        <end position="435"/>
    </location>
</feature>
<feature type="binding site" evidence="1">
    <location>
        <begin position="239"/>
        <end position="241"/>
    </location>
    <ligand>
        <name>L-serine</name>
        <dbReference type="ChEBI" id="CHEBI:33384"/>
    </ligand>
</feature>
<feature type="binding site" evidence="1">
    <location>
        <begin position="270"/>
        <end position="272"/>
    </location>
    <ligand>
        <name>ATP</name>
        <dbReference type="ChEBI" id="CHEBI:30616"/>
    </ligand>
</feature>
<feature type="binding site" evidence="1">
    <location>
        <position position="293"/>
    </location>
    <ligand>
        <name>L-serine</name>
        <dbReference type="ChEBI" id="CHEBI:33384"/>
    </ligand>
</feature>
<feature type="binding site" evidence="1">
    <location>
        <begin position="357"/>
        <end position="360"/>
    </location>
    <ligand>
        <name>ATP</name>
        <dbReference type="ChEBI" id="CHEBI:30616"/>
    </ligand>
</feature>
<feature type="binding site" evidence="1">
    <location>
        <position position="393"/>
    </location>
    <ligand>
        <name>L-serine</name>
        <dbReference type="ChEBI" id="CHEBI:33384"/>
    </ligand>
</feature>
<keyword id="KW-0030">Aminoacyl-tRNA synthetase</keyword>
<keyword id="KW-0067">ATP-binding</keyword>
<keyword id="KW-0963">Cytoplasm</keyword>
<keyword id="KW-0436">Ligase</keyword>
<keyword id="KW-0547">Nucleotide-binding</keyword>
<keyword id="KW-0648">Protein biosynthesis</keyword>
<keyword id="KW-1185">Reference proteome</keyword>
<accession>A7HXK4</accession>
<dbReference type="EC" id="6.1.1.11" evidence="1"/>
<dbReference type="EMBL" id="CP000774">
    <property type="protein sequence ID" value="ABS64637.1"/>
    <property type="molecule type" value="Genomic_DNA"/>
</dbReference>
<dbReference type="RefSeq" id="WP_012111958.1">
    <property type="nucleotide sequence ID" value="NC_009719.1"/>
</dbReference>
<dbReference type="SMR" id="A7HXK4"/>
<dbReference type="STRING" id="402881.Plav_3030"/>
<dbReference type="KEGG" id="pla:Plav_3030"/>
<dbReference type="eggNOG" id="COG0172">
    <property type="taxonomic scope" value="Bacteria"/>
</dbReference>
<dbReference type="HOGENOM" id="CLU_023797_1_1_5"/>
<dbReference type="OrthoDB" id="9804647at2"/>
<dbReference type="UniPathway" id="UPA00906">
    <property type="reaction ID" value="UER00895"/>
</dbReference>
<dbReference type="Proteomes" id="UP000006377">
    <property type="component" value="Chromosome"/>
</dbReference>
<dbReference type="GO" id="GO:0005737">
    <property type="term" value="C:cytoplasm"/>
    <property type="evidence" value="ECO:0007669"/>
    <property type="project" value="UniProtKB-SubCell"/>
</dbReference>
<dbReference type="GO" id="GO:0005524">
    <property type="term" value="F:ATP binding"/>
    <property type="evidence" value="ECO:0007669"/>
    <property type="project" value="UniProtKB-UniRule"/>
</dbReference>
<dbReference type="GO" id="GO:0004828">
    <property type="term" value="F:serine-tRNA ligase activity"/>
    <property type="evidence" value="ECO:0007669"/>
    <property type="project" value="UniProtKB-UniRule"/>
</dbReference>
<dbReference type="GO" id="GO:0016260">
    <property type="term" value="P:selenocysteine biosynthetic process"/>
    <property type="evidence" value="ECO:0007669"/>
    <property type="project" value="UniProtKB-UniRule"/>
</dbReference>
<dbReference type="GO" id="GO:0006434">
    <property type="term" value="P:seryl-tRNA aminoacylation"/>
    <property type="evidence" value="ECO:0007669"/>
    <property type="project" value="UniProtKB-UniRule"/>
</dbReference>
<dbReference type="CDD" id="cd00770">
    <property type="entry name" value="SerRS_core"/>
    <property type="match status" value="1"/>
</dbReference>
<dbReference type="Gene3D" id="3.30.930.10">
    <property type="entry name" value="Bira Bifunctional Protein, Domain 2"/>
    <property type="match status" value="1"/>
</dbReference>
<dbReference type="Gene3D" id="1.10.287.40">
    <property type="entry name" value="Serine-tRNA synthetase, tRNA binding domain"/>
    <property type="match status" value="1"/>
</dbReference>
<dbReference type="HAMAP" id="MF_00176">
    <property type="entry name" value="Ser_tRNA_synth_type1"/>
    <property type="match status" value="1"/>
</dbReference>
<dbReference type="InterPro" id="IPR002314">
    <property type="entry name" value="aa-tRNA-synt_IIb"/>
</dbReference>
<dbReference type="InterPro" id="IPR006195">
    <property type="entry name" value="aa-tRNA-synth_II"/>
</dbReference>
<dbReference type="InterPro" id="IPR045864">
    <property type="entry name" value="aa-tRNA-synth_II/BPL/LPL"/>
</dbReference>
<dbReference type="InterPro" id="IPR002317">
    <property type="entry name" value="Ser-tRNA-ligase_type_1"/>
</dbReference>
<dbReference type="InterPro" id="IPR015866">
    <property type="entry name" value="Ser-tRNA-synth_1_N"/>
</dbReference>
<dbReference type="InterPro" id="IPR042103">
    <property type="entry name" value="SerRS_1_N_sf"/>
</dbReference>
<dbReference type="InterPro" id="IPR033729">
    <property type="entry name" value="SerRS_core"/>
</dbReference>
<dbReference type="InterPro" id="IPR010978">
    <property type="entry name" value="tRNA-bd_arm"/>
</dbReference>
<dbReference type="NCBIfam" id="TIGR00414">
    <property type="entry name" value="serS"/>
    <property type="match status" value="1"/>
</dbReference>
<dbReference type="PANTHER" id="PTHR43697:SF1">
    <property type="entry name" value="SERINE--TRNA LIGASE"/>
    <property type="match status" value="1"/>
</dbReference>
<dbReference type="PANTHER" id="PTHR43697">
    <property type="entry name" value="SERYL-TRNA SYNTHETASE"/>
    <property type="match status" value="1"/>
</dbReference>
<dbReference type="Pfam" id="PF02403">
    <property type="entry name" value="Seryl_tRNA_N"/>
    <property type="match status" value="1"/>
</dbReference>
<dbReference type="Pfam" id="PF00587">
    <property type="entry name" value="tRNA-synt_2b"/>
    <property type="match status" value="1"/>
</dbReference>
<dbReference type="PIRSF" id="PIRSF001529">
    <property type="entry name" value="Ser-tRNA-synth_IIa"/>
    <property type="match status" value="1"/>
</dbReference>
<dbReference type="PRINTS" id="PR00981">
    <property type="entry name" value="TRNASYNTHSER"/>
</dbReference>
<dbReference type="SUPFAM" id="SSF55681">
    <property type="entry name" value="Class II aaRS and biotin synthetases"/>
    <property type="match status" value="1"/>
</dbReference>
<dbReference type="SUPFAM" id="SSF46589">
    <property type="entry name" value="tRNA-binding arm"/>
    <property type="match status" value="1"/>
</dbReference>
<dbReference type="PROSITE" id="PS50862">
    <property type="entry name" value="AA_TRNA_LIGASE_II"/>
    <property type="match status" value="1"/>
</dbReference>
<comment type="function">
    <text evidence="1">Catalyzes the attachment of serine to tRNA(Ser). Is also able to aminoacylate tRNA(Sec) with serine, to form the misacylated tRNA L-seryl-tRNA(Sec), which will be further converted into selenocysteinyl-tRNA(Sec).</text>
</comment>
<comment type="catalytic activity">
    <reaction evidence="1">
        <text>tRNA(Ser) + L-serine + ATP = L-seryl-tRNA(Ser) + AMP + diphosphate + H(+)</text>
        <dbReference type="Rhea" id="RHEA:12292"/>
        <dbReference type="Rhea" id="RHEA-COMP:9669"/>
        <dbReference type="Rhea" id="RHEA-COMP:9703"/>
        <dbReference type="ChEBI" id="CHEBI:15378"/>
        <dbReference type="ChEBI" id="CHEBI:30616"/>
        <dbReference type="ChEBI" id="CHEBI:33019"/>
        <dbReference type="ChEBI" id="CHEBI:33384"/>
        <dbReference type="ChEBI" id="CHEBI:78442"/>
        <dbReference type="ChEBI" id="CHEBI:78533"/>
        <dbReference type="ChEBI" id="CHEBI:456215"/>
        <dbReference type="EC" id="6.1.1.11"/>
    </reaction>
</comment>
<comment type="catalytic activity">
    <reaction evidence="1">
        <text>tRNA(Sec) + L-serine + ATP = L-seryl-tRNA(Sec) + AMP + diphosphate + H(+)</text>
        <dbReference type="Rhea" id="RHEA:42580"/>
        <dbReference type="Rhea" id="RHEA-COMP:9742"/>
        <dbReference type="Rhea" id="RHEA-COMP:10128"/>
        <dbReference type="ChEBI" id="CHEBI:15378"/>
        <dbReference type="ChEBI" id="CHEBI:30616"/>
        <dbReference type="ChEBI" id="CHEBI:33019"/>
        <dbReference type="ChEBI" id="CHEBI:33384"/>
        <dbReference type="ChEBI" id="CHEBI:78442"/>
        <dbReference type="ChEBI" id="CHEBI:78533"/>
        <dbReference type="ChEBI" id="CHEBI:456215"/>
        <dbReference type="EC" id="6.1.1.11"/>
    </reaction>
</comment>
<comment type="pathway">
    <text evidence="1">Aminoacyl-tRNA biosynthesis; selenocysteinyl-tRNA(Sec) biosynthesis; L-seryl-tRNA(Sec) from L-serine and tRNA(Sec): step 1/1.</text>
</comment>
<comment type="subunit">
    <text evidence="1">Homodimer. The tRNA molecule binds across the dimer.</text>
</comment>
<comment type="subcellular location">
    <subcellularLocation>
        <location evidence="1">Cytoplasm</location>
    </subcellularLocation>
</comment>
<comment type="domain">
    <text evidence="1">Consists of two distinct domains, a catalytic core and a N-terminal extension that is involved in tRNA binding.</text>
</comment>
<comment type="similarity">
    <text evidence="1">Belongs to the class-II aminoacyl-tRNA synthetase family. Type-1 seryl-tRNA synthetase subfamily.</text>
</comment>
<organism>
    <name type="scientific">Parvibaculum lavamentivorans (strain DS-1 / DSM 13023 / NCIMB 13966)</name>
    <dbReference type="NCBI Taxonomy" id="402881"/>
    <lineage>
        <taxon>Bacteria</taxon>
        <taxon>Pseudomonadati</taxon>
        <taxon>Pseudomonadota</taxon>
        <taxon>Alphaproteobacteria</taxon>
        <taxon>Hyphomicrobiales</taxon>
        <taxon>Parvibaculaceae</taxon>
        <taxon>Parvibaculum</taxon>
    </lineage>
</organism>
<protein>
    <recommendedName>
        <fullName evidence="1">Serine--tRNA ligase</fullName>
        <ecNumber evidence="1">6.1.1.11</ecNumber>
    </recommendedName>
    <alternativeName>
        <fullName evidence="1">Seryl-tRNA synthetase</fullName>
        <shortName evidence="1">SerRS</shortName>
    </alternativeName>
    <alternativeName>
        <fullName evidence="1">Seryl-tRNA(Ser/Sec) synthetase</fullName>
    </alternativeName>
</protein>